<evidence type="ECO:0000255" key="1">
    <source>
        <dbReference type="HAMAP-Rule" id="MF_00072"/>
    </source>
</evidence>
<dbReference type="EMBL" id="CP001138">
    <property type="protein sequence ID" value="ACH49693.1"/>
    <property type="molecule type" value="Genomic_DNA"/>
</dbReference>
<dbReference type="RefSeq" id="WP_000175965.1">
    <property type="nucleotide sequence ID" value="NC_011149.1"/>
</dbReference>
<dbReference type="SMR" id="B5F516"/>
<dbReference type="KEGG" id="sea:SeAg_B4881"/>
<dbReference type="HOGENOM" id="CLU_002794_2_1_6"/>
<dbReference type="Proteomes" id="UP000008819">
    <property type="component" value="Chromosome"/>
</dbReference>
<dbReference type="GO" id="GO:0005829">
    <property type="term" value="C:cytosol"/>
    <property type="evidence" value="ECO:0007669"/>
    <property type="project" value="TreeGrafter"/>
</dbReference>
<dbReference type="GO" id="GO:0005525">
    <property type="term" value="F:GTP binding"/>
    <property type="evidence" value="ECO:0007669"/>
    <property type="project" value="UniProtKB-UniRule"/>
</dbReference>
<dbReference type="GO" id="GO:0003924">
    <property type="term" value="F:GTPase activity"/>
    <property type="evidence" value="ECO:0007669"/>
    <property type="project" value="InterPro"/>
</dbReference>
<dbReference type="GO" id="GO:0097216">
    <property type="term" value="F:guanosine tetraphosphate binding"/>
    <property type="evidence" value="ECO:0007669"/>
    <property type="project" value="UniProtKB-ARBA"/>
</dbReference>
<dbReference type="GO" id="GO:0016150">
    <property type="term" value="F:translation release factor activity, codon nonspecific"/>
    <property type="evidence" value="ECO:0007669"/>
    <property type="project" value="TreeGrafter"/>
</dbReference>
<dbReference type="GO" id="GO:0016149">
    <property type="term" value="F:translation release factor activity, codon specific"/>
    <property type="evidence" value="ECO:0007669"/>
    <property type="project" value="UniProtKB-UniRule"/>
</dbReference>
<dbReference type="GO" id="GO:0006449">
    <property type="term" value="P:regulation of translational termination"/>
    <property type="evidence" value="ECO:0007669"/>
    <property type="project" value="UniProtKB-UniRule"/>
</dbReference>
<dbReference type="CDD" id="cd04169">
    <property type="entry name" value="RF3"/>
    <property type="match status" value="1"/>
</dbReference>
<dbReference type="CDD" id="cd03689">
    <property type="entry name" value="RF3_II"/>
    <property type="match status" value="1"/>
</dbReference>
<dbReference type="CDD" id="cd16259">
    <property type="entry name" value="RF3_III"/>
    <property type="match status" value="1"/>
</dbReference>
<dbReference type="FunFam" id="2.40.30.10:FF:000040">
    <property type="entry name" value="Peptide chain release factor 3"/>
    <property type="match status" value="1"/>
</dbReference>
<dbReference type="FunFam" id="3.30.70.3280:FF:000001">
    <property type="entry name" value="Peptide chain release factor 3"/>
    <property type="match status" value="1"/>
</dbReference>
<dbReference type="FunFam" id="3.40.50.300:FF:000184">
    <property type="entry name" value="Peptide chain release factor 3"/>
    <property type="match status" value="1"/>
</dbReference>
<dbReference type="FunFam" id="3.40.50.300:FF:000253">
    <property type="entry name" value="Peptide chain release factor 3"/>
    <property type="match status" value="1"/>
</dbReference>
<dbReference type="Gene3D" id="3.40.50.300">
    <property type="entry name" value="P-loop containing nucleotide triphosphate hydrolases"/>
    <property type="match status" value="3"/>
</dbReference>
<dbReference type="Gene3D" id="3.30.70.3280">
    <property type="entry name" value="Peptide chain release factor 3, domain III"/>
    <property type="match status" value="1"/>
</dbReference>
<dbReference type="HAMAP" id="MF_00072">
    <property type="entry name" value="Rel_fac_3"/>
    <property type="match status" value="1"/>
</dbReference>
<dbReference type="InterPro" id="IPR053905">
    <property type="entry name" value="EF-G-like_DII"/>
</dbReference>
<dbReference type="InterPro" id="IPR035647">
    <property type="entry name" value="EFG_III/V"/>
</dbReference>
<dbReference type="InterPro" id="IPR031157">
    <property type="entry name" value="G_TR_CS"/>
</dbReference>
<dbReference type="InterPro" id="IPR027417">
    <property type="entry name" value="P-loop_NTPase"/>
</dbReference>
<dbReference type="InterPro" id="IPR004548">
    <property type="entry name" value="PrfC"/>
</dbReference>
<dbReference type="InterPro" id="IPR032090">
    <property type="entry name" value="RF3_C"/>
</dbReference>
<dbReference type="InterPro" id="IPR038467">
    <property type="entry name" value="RF3_dom_3_sf"/>
</dbReference>
<dbReference type="InterPro" id="IPR041732">
    <property type="entry name" value="RF3_GTP-bd"/>
</dbReference>
<dbReference type="InterPro" id="IPR005225">
    <property type="entry name" value="Small_GTP-bd"/>
</dbReference>
<dbReference type="InterPro" id="IPR000795">
    <property type="entry name" value="T_Tr_GTP-bd_dom"/>
</dbReference>
<dbReference type="InterPro" id="IPR009000">
    <property type="entry name" value="Transl_B-barrel_sf"/>
</dbReference>
<dbReference type="NCBIfam" id="TIGR00503">
    <property type="entry name" value="prfC"/>
    <property type="match status" value="1"/>
</dbReference>
<dbReference type="NCBIfam" id="NF001964">
    <property type="entry name" value="PRK00741.1"/>
    <property type="match status" value="1"/>
</dbReference>
<dbReference type="NCBIfam" id="TIGR00231">
    <property type="entry name" value="small_GTP"/>
    <property type="match status" value="1"/>
</dbReference>
<dbReference type="PANTHER" id="PTHR43556">
    <property type="entry name" value="PEPTIDE CHAIN RELEASE FACTOR RF3"/>
    <property type="match status" value="1"/>
</dbReference>
<dbReference type="PANTHER" id="PTHR43556:SF2">
    <property type="entry name" value="PEPTIDE CHAIN RELEASE FACTOR RF3"/>
    <property type="match status" value="1"/>
</dbReference>
<dbReference type="Pfam" id="PF22042">
    <property type="entry name" value="EF-G_D2"/>
    <property type="match status" value="1"/>
</dbReference>
<dbReference type="Pfam" id="PF00009">
    <property type="entry name" value="GTP_EFTU"/>
    <property type="match status" value="1"/>
</dbReference>
<dbReference type="Pfam" id="PF16658">
    <property type="entry name" value="RF3_C"/>
    <property type="match status" value="1"/>
</dbReference>
<dbReference type="PRINTS" id="PR00315">
    <property type="entry name" value="ELONGATNFCT"/>
</dbReference>
<dbReference type="SUPFAM" id="SSF54980">
    <property type="entry name" value="EF-G C-terminal domain-like"/>
    <property type="match status" value="1"/>
</dbReference>
<dbReference type="SUPFAM" id="SSF52540">
    <property type="entry name" value="P-loop containing nucleoside triphosphate hydrolases"/>
    <property type="match status" value="1"/>
</dbReference>
<dbReference type="SUPFAM" id="SSF50447">
    <property type="entry name" value="Translation proteins"/>
    <property type="match status" value="1"/>
</dbReference>
<dbReference type="PROSITE" id="PS00301">
    <property type="entry name" value="G_TR_1"/>
    <property type="match status" value="1"/>
</dbReference>
<dbReference type="PROSITE" id="PS51722">
    <property type="entry name" value="G_TR_2"/>
    <property type="match status" value="1"/>
</dbReference>
<gene>
    <name evidence="1" type="primary">prfC</name>
    <name type="ordered locus">SeAg_B4881</name>
</gene>
<proteinExistence type="inferred from homology"/>
<reference key="1">
    <citation type="journal article" date="2011" name="J. Bacteriol.">
        <title>Comparative genomics of 28 Salmonella enterica isolates: evidence for CRISPR-mediated adaptive sublineage evolution.</title>
        <authorList>
            <person name="Fricke W.F."/>
            <person name="Mammel M.K."/>
            <person name="McDermott P.F."/>
            <person name="Tartera C."/>
            <person name="White D.G."/>
            <person name="Leclerc J.E."/>
            <person name="Ravel J."/>
            <person name="Cebula T.A."/>
        </authorList>
    </citation>
    <scope>NUCLEOTIDE SEQUENCE [LARGE SCALE GENOMIC DNA]</scope>
    <source>
        <strain>SL483</strain>
    </source>
</reference>
<comment type="function">
    <text evidence="1">Increases the formation of ribosomal termination complexes and stimulates activities of RF-1 and RF-2. It binds guanine nucleotides and has strong preference for UGA stop codons. It may interact directly with the ribosome. The stimulation of RF-1 and RF-2 is significantly reduced by GTP and GDP, but not by GMP.</text>
</comment>
<comment type="subcellular location">
    <subcellularLocation>
        <location evidence="1">Cytoplasm</location>
    </subcellularLocation>
</comment>
<comment type="similarity">
    <text evidence="1">Belongs to the TRAFAC class translation factor GTPase superfamily. Classic translation factor GTPase family. PrfC subfamily.</text>
</comment>
<feature type="chain" id="PRO_1000092493" description="Peptide chain release factor 3">
    <location>
        <begin position="1"/>
        <end position="529"/>
    </location>
</feature>
<feature type="domain" description="tr-type G">
    <location>
        <begin position="11"/>
        <end position="280"/>
    </location>
</feature>
<feature type="binding site" evidence="1">
    <location>
        <begin position="20"/>
        <end position="27"/>
    </location>
    <ligand>
        <name>GTP</name>
        <dbReference type="ChEBI" id="CHEBI:37565"/>
    </ligand>
</feature>
<feature type="binding site" evidence="1">
    <location>
        <begin position="88"/>
        <end position="92"/>
    </location>
    <ligand>
        <name>GTP</name>
        <dbReference type="ChEBI" id="CHEBI:37565"/>
    </ligand>
</feature>
<feature type="binding site" evidence="1">
    <location>
        <begin position="142"/>
        <end position="145"/>
    </location>
    <ligand>
        <name>GTP</name>
        <dbReference type="ChEBI" id="CHEBI:37565"/>
    </ligand>
</feature>
<organism>
    <name type="scientific">Salmonella agona (strain SL483)</name>
    <dbReference type="NCBI Taxonomy" id="454166"/>
    <lineage>
        <taxon>Bacteria</taxon>
        <taxon>Pseudomonadati</taxon>
        <taxon>Pseudomonadota</taxon>
        <taxon>Gammaproteobacteria</taxon>
        <taxon>Enterobacterales</taxon>
        <taxon>Enterobacteriaceae</taxon>
        <taxon>Salmonella</taxon>
    </lineage>
</organism>
<protein>
    <recommendedName>
        <fullName evidence="1">Peptide chain release factor 3</fullName>
        <shortName evidence="1">RF-3</shortName>
    </recommendedName>
</protein>
<sequence>MTLSPYLQEVAKRRTFAIISHPDAGKTTITEKVLLFGQAIQTAGTVKGRGSSQHAKSDWMEMEKQRGISITTSVMQFPYHDCLVNLLDTPGHEDFSEDTYRTLTAVDCCLMVIDAAKGVEDRTRKLMEVTRLRDTPILTFMNKLDRDIRDPMELLDEVENELKIGCAPITWPIGCGKLFKGVYHLYKDETYLYQTGKGHTIQEVRIVKGLNNPDLDAAVGEDLAQQLRDELELVQGASNEFDEELFLAGEITPVFFGTALGNFGVDHMLDGLVAWAPAPMPRQTDTRTVEASEEKFTGFVFKIQANMDPKHRDRVAFMRVVSGKYEKGMKLRQVRTGKDVVISDALTFMAGDRSHVEEAYPGDILGLHNHGTIQIGDTFTQGEMMKFTGIPNFAPELFRRIRLKDPLKQKQLLKGLVQLSEEGAVQVFRPISNNDLIVGAVGVLQFDVVVARLKSEYNVEAIYESVNVATARWVESADAKKFEEFKRKNETQLALDGGDNLTYIAPTMVNLNLTQERYPDVQFRKTREH</sequence>
<accession>B5F516</accession>
<name>RF3_SALA4</name>
<keyword id="KW-0963">Cytoplasm</keyword>
<keyword id="KW-0342">GTP-binding</keyword>
<keyword id="KW-0547">Nucleotide-binding</keyword>
<keyword id="KW-0648">Protein biosynthesis</keyword>